<sequence>MPFVEEEFEILKPTKALFFVRDVLKCSLKEAQRHLDKQRLKQNQQAVRKSQIIQGVVRLIHFKPNEKTQALVFETKDFGVFDKPHQVYTHPKGYFYHESLLDCIQSHFGKNAHPAHRLDYETSGLVLAGKTLQSVKDLKALFMQKKVKKTYLALAHGLVEKSMKIDKPILTPQNIQKDLHIRSKISPLGKQSITLVEPLSYNPFLDISLLKITPLTGRTHQIRLHLSSVDHRIVGEGLYGVADENAREYLQLKRENNAPLLMLHAASLEFEFKGAIYKIASPMPERFMPFLKDLSFFY</sequence>
<keyword id="KW-0413">Isomerase</keyword>
<keyword id="KW-1185">Reference proteome</keyword>
<proteinExistence type="evidence at protein level"/>
<organism>
    <name type="scientific">Helicobacter pylori (strain ATCC 700392 / 26695)</name>
    <name type="common">Campylobacter pylori</name>
    <dbReference type="NCBI Taxonomy" id="85962"/>
    <lineage>
        <taxon>Bacteria</taxon>
        <taxon>Pseudomonadati</taxon>
        <taxon>Campylobacterota</taxon>
        <taxon>Epsilonproteobacteria</taxon>
        <taxon>Campylobacterales</taxon>
        <taxon>Helicobacteraceae</taxon>
        <taxon>Helicobacter</taxon>
    </lineage>
</organism>
<accession>O25114</accession>
<gene>
    <name type="ordered locus">HP_0347</name>
</gene>
<evidence type="ECO:0000250" key="1"/>
<evidence type="ECO:0000305" key="2"/>
<protein>
    <recommendedName>
        <fullName>Uncharacterized RNA pseudouridine synthase HP_0347</fullName>
        <ecNumber>5.4.99.-</ecNumber>
    </recommendedName>
    <alternativeName>
        <fullName>RNA pseudouridylate synthase</fullName>
    </alternativeName>
    <alternativeName>
        <fullName>RNA-uridine isomerase</fullName>
    </alternativeName>
</protein>
<name>Y347_HELPY</name>
<feature type="chain" id="PRO_0000162733" description="Uncharacterized RNA pseudouridine synthase HP_0347">
    <location>
        <begin position="1"/>
        <end position="298"/>
    </location>
</feature>
<feature type="active site" evidence="1">
    <location>
        <position position="119"/>
    </location>
</feature>
<dbReference type="EC" id="5.4.99.-"/>
<dbReference type="EMBL" id="AE000511">
    <property type="protein sequence ID" value="AAD07404.1"/>
    <property type="molecule type" value="Genomic_DNA"/>
</dbReference>
<dbReference type="PIR" id="C64563">
    <property type="entry name" value="C64563"/>
</dbReference>
<dbReference type="RefSeq" id="NP_207145.1">
    <property type="nucleotide sequence ID" value="NC_000915.1"/>
</dbReference>
<dbReference type="RefSeq" id="WP_001117124.1">
    <property type="nucleotide sequence ID" value="NC_018939.1"/>
</dbReference>
<dbReference type="SMR" id="O25114"/>
<dbReference type="DIP" id="DIP-3403N"/>
<dbReference type="IntAct" id="O25114">
    <property type="interactions" value="10"/>
</dbReference>
<dbReference type="MINT" id="O25114"/>
<dbReference type="STRING" id="85962.HP_0347"/>
<dbReference type="PaxDb" id="85962-C694_01760"/>
<dbReference type="EnsemblBacteria" id="AAD07404">
    <property type="protein sequence ID" value="AAD07404"/>
    <property type="gene ID" value="HP_0347"/>
</dbReference>
<dbReference type="KEGG" id="heo:C694_01760"/>
<dbReference type="KEGG" id="hpy:HP_0347"/>
<dbReference type="PATRIC" id="fig|85962.47.peg.370"/>
<dbReference type="eggNOG" id="COG0564">
    <property type="taxonomic scope" value="Bacteria"/>
</dbReference>
<dbReference type="InParanoid" id="O25114"/>
<dbReference type="OrthoDB" id="128480at2"/>
<dbReference type="PhylomeDB" id="O25114"/>
<dbReference type="Proteomes" id="UP000000429">
    <property type="component" value="Chromosome"/>
</dbReference>
<dbReference type="GO" id="GO:0140098">
    <property type="term" value="F:catalytic activity, acting on RNA"/>
    <property type="evidence" value="ECO:0007669"/>
    <property type="project" value="UniProtKB-ARBA"/>
</dbReference>
<dbReference type="GO" id="GO:0009982">
    <property type="term" value="F:pseudouridine synthase activity"/>
    <property type="evidence" value="ECO:0000318"/>
    <property type="project" value="GO_Central"/>
</dbReference>
<dbReference type="GO" id="GO:0003723">
    <property type="term" value="F:RNA binding"/>
    <property type="evidence" value="ECO:0007669"/>
    <property type="project" value="InterPro"/>
</dbReference>
<dbReference type="GO" id="GO:0000455">
    <property type="term" value="P:enzyme-directed rRNA pseudouridine synthesis"/>
    <property type="evidence" value="ECO:0000318"/>
    <property type="project" value="GO_Central"/>
</dbReference>
<dbReference type="CDD" id="cd02869">
    <property type="entry name" value="PseudoU_synth_RluA_like"/>
    <property type="match status" value="1"/>
</dbReference>
<dbReference type="Gene3D" id="3.30.2350.10">
    <property type="entry name" value="Pseudouridine synthase"/>
    <property type="match status" value="1"/>
</dbReference>
<dbReference type="InterPro" id="IPR020103">
    <property type="entry name" value="PsdUridine_synth_cat_dom_sf"/>
</dbReference>
<dbReference type="InterPro" id="IPR006224">
    <property type="entry name" value="PsdUridine_synth_RluA-like_CS"/>
</dbReference>
<dbReference type="InterPro" id="IPR006145">
    <property type="entry name" value="PsdUridine_synth_RsuA/RluA"/>
</dbReference>
<dbReference type="InterPro" id="IPR050188">
    <property type="entry name" value="RluA_PseudoU_synthase"/>
</dbReference>
<dbReference type="PANTHER" id="PTHR21600">
    <property type="entry name" value="MITOCHONDRIAL RNA PSEUDOURIDINE SYNTHASE"/>
    <property type="match status" value="1"/>
</dbReference>
<dbReference type="PANTHER" id="PTHR21600:SF44">
    <property type="entry name" value="RIBOSOMAL LARGE SUBUNIT PSEUDOURIDINE SYNTHASE D"/>
    <property type="match status" value="1"/>
</dbReference>
<dbReference type="Pfam" id="PF00849">
    <property type="entry name" value="PseudoU_synth_2"/>
    <property type="match status" value="1"/>
</dbReference>
<dbReference type="SUPFAM" id="SSF55120">
    <property type="entry name" value="Pseudouridine synthase"/>
    <property type="match status" value="1"/>
</dbReference>
<dbReference type="PROSITE" id="PS01129">
    <property type="entry name" value="PSI_RLU"/>
    <property type="match status" value="1"/>
</dbReference>
<comment type="catalytic activity">
    <reaction>
        <text>a uridine in RNA = a pseudouridine in RNA</text>
        <dbReference type="Rhea" id="RHEA:48348"/>
        <dbReference type="Rhea" id="RHEA-COMP:12068"/>
        <dbReference type="Rhea" id="RHEA-COMP:12069"/>
        <dbReference type="ChEBI" id="CHEBI:65314"/>
        <dbReference type="ChEBI" id="CHEBI:65315"/>
    </reaction>
</comment>
<comment type="interaction">
    <interactant intactId="EBI-7497815">
        <id>O25114</id>
    </interactant>
    <interactant intactId="EBI-7497752">
        <id>P94844</id>
        <label>dapB</label>
    </interactant>
    <organismsDiffer>false</organismsDiffer>
    <experiments>3</experiments>
</comment>
<comment type="similarity">
    <text evidence="2">Belongs to the pseudouridine synthase RluA family.</text>
</comment>
<reference key="1">
    <citation type="journal article" date="1997" name="Nature">
        <title>The complete genome sequence of the gastric pathogen Helicobacter pylori.</title>
        <authorList>
            <person name="Tomb J.-F."/>
            <person name="White O."/>
            <person name="Kerlavage A.R."/>
            <person name="Clayton R.A."/>
            <person name="Sutton G.G."/>
            <person name="Fleischmann R.D."/>
            <person name="Ketchum K.A."/>
            <person name="Klenk H.-P."/>
            <person name="Gill S.R."/>
            <person name="Dougherty B.A."/>
            <person name="Nelson K.E."/>
            <person name="Quackenbush J."/>
            <person name="Zhou L."/>
            <person name="Kirkness E.F."/>
            <person name="Peterson S.N."/>
            <person name="Loftus B.J."/>
            <person name="Richardson D.L."/>
            <person name="Dodson R.J."/>
            <person name="Khalak H.G."/>
            <person name="Glodek A."/>
            <person name="McKenney K."/>
            <person name="FitzGerald L.M."/>
            <person name="Lee N."/>
            <person name="Adams M.D."/>
            <person name="Hickey E.K."/>
            <person name="Berg D.E."/>
            <person name="Gocayne J.D."/>
            <person name="Utterback T.R."/>
            <person name="Peterson J.D."/>
            <person name="Kelley J.M."/>
            <person name="Cotton M.D."/>
            <person name="Weidman J.F."/>
            <person name="Fujii C."/>
            <person name="Bowman C."/>
            <person name="Watthey L."/>
            <person name="Wallin E."/>
            <person name="Hayes W.S."/>
            <person name="Borodovsky M."/>
            <person name="Karp P.D."/>
            <person name="Smith H.O."/>
            <person name="Fraser C.M."/>
            <person name="Venter J.C."/>
        </authorList>
    </citation>
    <scope>NUCLEOTIDE SEQUENCE [LARGE SCALE GENOMIC DNA]</scope>
    <source>
        <strain>ATCC 700392 / 26695</strain>
    </source>
</reference>